<evidence type="ECO:0000250" key="1"/>
<evidence type="ECO:0000269" key="2">
    <source>
    </source>
</evidence>
<evidence type="ECO:0000269" key="3">
    <source>
    </source>
</evidence>
<evidence type="ECO:0000269" key="4">
    <source>
    </source>
</evidence>
<evidence type="ECO:0000305" key="5"/>
<evidence type="ECO:0007829" key="6">
    <source>
        <dbReference type="PDB" id="1JNI"/>
    </source>
</evidence>
<name>NAPB_HAEIN</name>
<feature type="signal peptide" evidence="3">
    <location>
        <begin position="1"/>
        <end position="26"/>
    </location>
</feature>
<feature type="chain" id="PRO_0000006589" description="Periplasmic nitrate reductase, electron transfer subunit">
    <location>
        <begin position="27"/>
        <end position="150"/>
    </location>
</feature>
<feature type="binding site" description="axial binding residue">
    <location>
        <position position="70"/>
    </location>
    <ligand>
        <name>heme c</name>
        <dbReference type="ChEBI" id="CHEBI:61717"/>
        <label>1</label>
    </ligand>
    <ligandPart>
        <name>Fe</name>
        <dbReference type="ChEBI" id="CHEBI:18248"/>
    </ligandPart>
</feature>
<feature type="binding site" description="covalent" evidence="4">
    <location>
        <position position="84"/>
    </location>
    <ligand>
        <name>heme c</name>
        <dbReference type="ChEBI" id="CHEBI:61717"/>
        <label>1</label>
    </ligand>
</feature>
<feature type="binding site" description="covalent" evidence="4">
    <location>
        <position position="87"/>
    </location>
    <ligand>
        <name>heme c</name>
        <dbReference type="ChEBI" id="CHEBI:61717"/>
        <label>1</label>
    </ligand>
</feature>
<feature type="binding site" description="axial binding residue">
    <location>
        <position position="88"/>
    </location>
    <ligand>
        <name>heme c</name>
        <dbReference type="ChEBI" id="CHEBI:61717"/>
        <label>1</label>
    </ligand>
    <ligandPart>
        <name>Fe</name>
        <dbReference type="ChEBI" id="CHEBI:18248"/>
    </ligandPart>
</feature>
<feature type="binding site" description="axial binding residue">
    <location>
        <position position="105"/>
    </location>
    <ligand>
        <name>heme c</name>
        <dbReference type="ChEBI" id="CHEBI:61717"/>
        <label>2</label>
    </ligand>
    <ligandPart>
        <name>Fe</name>
        <dbReference type="ChEBI" id="CHEBI:18248"/>
    </ligandPart>
</feature>
<feature type="binding site" description="covalent" evidence="4">
    <location>
        <position position="124"/>
    </location>
    <ligand>
        <name>heme c</name>
        <dbReference type="ChEBI" id="CHEBI:61717"/>
        <label>2</label>
    </ligand>
</feature>
<feature type="binding site" description="covalent" evidence="4">
    <location>
        <position position="127"/>
    </location>
    <ligand>
        <name>heme c</name>
        <dbReference type="ChEBI" id="CHEBI:61717"/>
        <label>2</label>
    </ligand>
</feature>
<feature type="binding site" description="axial binding residue">
    <location>
        <position position="128"/>
    </location>
    <ligand>
        <name>heme c</name>
        <dbReference type="ChEBI" id="CHEBI:61717"/>
        <label>2</label>
    </ligand>
    <ligandPart>
        <name>Fe</name>
        <dbReference type="ChEBI" id="CHEBI:18248"/>
    </ligandPart>
</feature>
<feature type="helix" evidence="6">
    <location>
        <begin position="85"/>
        <end position="88"/>
    </location>
</feature>
<feature type="turn" evidence="6">
    <location>
        <begin position="90"/>
        <end position="92"/>
    </location>
</feature>
<feature type="helix" evidence="6">
    <location>
        <begin position="93"/>
        <end position="96"/>
    </location>
</feature>
<feature type="helix" evidence="6">
    <location>
        <begin position="103"/>
        <end position="105"/>
    </location>
</feature>
<feature type="helix" evidence="6">
    <location>
        <begin position="124"/>
        <end position="126"/>
    </location>
</feature>
<protein>
    <recommendedName>
        <fullName>Periplasmic nitrate reductase, electron transfer subunit</fullName>
    </recommendedName>
    <alternativeName>
        <fullName>Diheme cytochrome c NapB</fullName>
    </alternativeName>
</protein>
<organism>
    <name type="scientific">Haemophilus influenzae (strain ATCC 51907 / DSM 11121 / KW20 / Rd)</name>
    <dbReference type="NCBI Taxonomy" id="71421"/>
    <lineage>
        <taxon>Bacteria</taxon>
        <taxon>Pseudomonadati</taxon>
        <taxon>Pseudomonadota</taxon>
        <taxon>Gammaproteobacteria</taxon>
        <taxon>Pasteurellales</taxon>
        <taxon>Pasteurellaceae</taxon>
        <taxon>Haemophilus</taxon>
    </lineage>
</organism>
<comment type="function">
    <text evidence="3">Electron transfer subunit of the periplasmic nitrate reductase complex NapAB. Receives electrons from the membrane-anchored tetraheme c-type NapC protein and transfers these to NapA subunit, thus allowing electron flow between membrane and periplasm. Essential for periplasmic nitrate reduction with nitrate as the terminal electron acceptor.</text>
</comment>
<comment type="biophysicochemical properties">
    <redoxPotential>
        <text evidence="3">E(0) are -25 mV and -175 mV.</text>
    </redoxPotential>
</comment>
<comment type="subunit">
    <text evidence="1">Component of the periplasmic nitrate reductase NapAB complex composed of NapA and NapB.</text>
</comment>
<comment type="subcellular location">
    <subcellularLocation>
        <location evidence="2 3">Periplasm</location>
    </subcellularLocation>
</comment>
<comment type="PTM">
    <text>Binds 2 heme C groups per subunit.</text>
</comment>
<comment type="mass spectrometry" mass="14748.68" method="Electrospray" evidence="2"/>
<comment type="similarity">
    <text evidence="5">Belongs to the NapB family.</text>
</comment>
<accession>P44654</accession>
<gene>
    <name type="primary">napB</name>
    <name type="ordered locus">HI_0347</name>
</gene>
<keyword id="KW-0002">3D-structure</keyword>
<keyword id="KW-0903">Direct protein sequencing</keyword>
<keyword id="KW-0249">Electron transport</keyword>
<keyword id="KW-0349">Heme</keyword>
<keyword id="KW-0408">Iron</keyword>
<keyword id="KW-0479">Metal-binding</keyword>
<keyword id="KW-0574">Periplasm</keyword>
<keyword id="KW-1185">Reference proteome</keyword>
<keyword id="KW-0732">Signal</keyword>
<keyword id="KW-0813">Transport</keyword>
<dbReference type="EMBL" id="L42023">
    <property type="protein sequence ID" value="AAC22008.1"/>
    <property type="molecule type" value="Genomic_DNA"/>
</dbReference>
<dbReference type="PIR" id="C64149">
    <property type="entry name" value="C64149"/>
</dbReference>
<dbReference type="RefSeq" id="NP_438511.1">
    <property type="nucleotide sequence ID" value="NC_000907.1"/>
</dbReference>
<dbReference type="PDB" id="1JNI">
    <property type="method" value="X-ray"/>
    <property type="resolution" value="1.25 A"/>
    <property type="chains" value="A=28-150"/>
</dbReference>
<dbReference type="PDBsum" id="1JNI"/>
<dbReference type="SMR" id="P44654"/>
<dbReference type="STRING" id="71421.HI_0347"/>
<dbReference type="EnsemblBacteria" id="AAC22008">
    <property type="protein sequence ID" value="AAC22008"/>
    <property type="gene ID" value="HI_0347"/>
</dbReference>
<dbReference type="KEGG" id="hin:HI_0347"/>
<dbReference type="PATRIC" id="fig|71421.8.peg.366"/>
<dbReference type="eggNOG" id="COG3043">
    <property type="taxonomic scope" value="Bacteria"/>
</dbReference>
<dbReference type="HOGENOM" id="CLU_103367_3_0_6"/>
<dbReference type="OrthoDB" id="13290at2"/>
<dbReference type="PhylomeDB" id="P44654"/>
<dbReference type="BioCyc" id="HINF71421:G1GJ1-363-MONOMER"/>
<dbReference type="EvolutionaryTrace" id="P44654"/>
<dbReference type="Proteomes" id="UP000000579">
    <property type="component" value="Chromosome"/>
</dbReference>
<dbReference type="GO" id="GO:0042597">
    <property type="term" value="C:periplasmic space"/>
    <property type="evidence" value="ECO:0007669"/>
    <property type="project" value="UniProtKB-SubCell"/>
</dbReference>
<dbReference type="GO" id="GO:0046872">
    <property type="term" value="F:metal ion binding"/>
    <property type="evidence" value="ECO:0007669"/>
    <property type="project" value="UniProtKB-KW"/>
</dbReference>
<dbReference type="GO" id="GO:0060090">
    <property type="term" value="F:molecular adaptor activity"/>
    <property type="evidence" value="ECO:0000269"/>
    <property type="project" value="DisProt"/>
</dbReference>
<dbReference type="GO" id="GO:0009061">
    <property type="term" value="P:anaerobic respiration"/>
    <property type="evidence" value="ECO:0000318"/>
    <property type="project" value="GO_Central"/>
</dbReference>
<dbReference type="DisProt" id="DP00899"/>
<dbReference type="FunFam" id="1.10.1130.10:FF:000001">
    <property type="entry name" value="Periplasmic nitrate reductase, electron transfer subunit"/>
    <property type="match status" value="1"/>
</dbReference>
<dbReference type="Gene3D" id="1.10.1130.10">
    <property type="entry name" value="Flavocytochrome C3, Chain A"/>
    <property type="match status" value="1"/>
</dbReference>
<dbReference type="InterPro" id="IPR036280">
    <property type="entry name" value="Multihaem_cyt_sf"/>
</dbReference>
<dbReference type="InterPro" id="IPR005591">
    <property type="entry name" value="NapB"/>
</dbReference>
<dbReference type="PANTHER" id="PTHR38604">
    <property type="entry name" value="PERIPLASMIC NITRATE REDUCTASE, ELECTRON TRANSFER SUBUNIT"/>
    <property type="match status" value="1"/>
</dbReference>
<dbReference type="PANTHER" id="PTHR38604:SF1">
    <property type="entry name" value="PERIPLASMIC NITRATE REDUCTASE, ELECTRON TRANSFER SUBUNIT"/>
    <property type="match status" value="1"/>
</dbReference>
<dbReference type="Pfam" id="PF03892">
    <property type="entry name" value="NapB"/>
    <property type="match status" value="1"/>
</dbReference>
<dbReference type="PIRSF" id="PIRSF006105">
    <property type="entry name" value="NapB"/>
    <property type="match status" value="1"/>
</dbReference>
<dbReference type="SUPFAM" id="SSF48695">
    <property type="entry name" value="Multiheme cytochromes"/>
    <property type="match status" value="1"/>
</dbReference>
<dbReference type="PROSITE" id="PS51008">
    <property type="entry name" value="MULTIHEME_CYTC"/>
    <property type="match status" value="1"/>
</dbReference>
<sequence length="150" mass="16255">MINMTKQVSKILAGLFTALFAGSLMASDAPAVGKDLTQAAENIPPAFHNAPRQGELPALNYVNQPPMVPHSVANYQVTKNVNQCLNCHSPENSRLSGATRISPTHFMDRDGKVGSSSSPRRYFCLQCHVSQANVDPIVPNDFKPMKGYGN</sequence>
<reference key="1">
    <citation type="journal article" date="1995" name="Science">
        <title>Whole-genome random sequencing and assembly of Haemophilus influenzae Rd.</title>
        <authorList>
            <person name="Fleischmann R.D."/>
            <person name="Adams M.D."/>
            <person name="White O."/>
            <person name="Clayton R.A."/>
            <person name="Kirkness E.F."/>
            <person name="Kerlavage A.R."/>
            <person name="Bult C.J."/>
            <person name="Tomb J.-F."/>
            <person name="Dougherty B.A."/>
            <person name="Merrick J.M."/>
            <person name="McKenney K."/>
            <person name="Sutton G.G."/>
            <person name="FitzHugh W."/>
            <person name="Fields C.A."/>
            <person name="Gocayne J.D."/>
            <person name="Scott J.D."/>
            <person name="Shirley R."/>
            <person name="Liu L.-I."/>
            <person name="Glodek A."/>
            <person name="Kelley J.M."/>
            <person name="Weidman J.F."/>
            <person name="Phillips C.A."/>
            <person name="Spriggs T."/>
            <person name="Hedblom E."/>
            <person name="Cotton M.D."/>
            <person name="Utterback T.R."/>
            <person name="Hanna M.C."/>
            <person name="Nguyen D.T."/>
            <person name="Saudek D.M."/>
            <person name="Brandon R.C."/>
            <person name="Fine L.D."/>
            <person name="Fritchman J.L."/>
            <person name="Fuhrmann J.L."/>
            <person name="Geoghagen N.S.M."/>
            <person name="Gnehm C.L."/>
            <person name="McDonald L.A."/>
            <person name="Small K.V."/>
            <person name="Fraser C.M."/>
            <person name="Smith H.O."/>
            <person name="Venter J.C."/>
        </authorList>
    </citation>
    <scope>NUCLEOTIDE SEQUENCE [LARGE SCALE GENOMIC DNA]</scope>
    <source>
        <strain>ATCC 51907 / DSM 11121 / KW20 / Rd</strain>
    </source>
</reference>
<reference key="2">
    <citation type="journal article" date="2001" name="Biochem. J.">
        <title>Overproduction, purification and novel redox properties of the dihaem cytochrome c, NapB, from Haemophilus influenzae.</title>
        <authorList>
            <person name="Brige A."/>
            <person name="Cole J.A."/>
            <person name="Hagen W.R."/>
            <person name="Guisez Y."/>
            <person name="Van Beeumen J.J."/>
        </authorList>
    </citation>
    <scope>PROTEIN SEQUENCE OF 27-31</scope>
    <scope>FUNCTION</scope>
    <scope>ABSORPTION SPECTROSCOPY</scope>
    <scope>BIOPHYSICOCHEMICAL PROPERTIES</scope>
    <scope>SUBCELLULAR LOCATION</scope>
    <scope>PTM</scope>
    <scope>IDENTIFICATION BY MASS SPECTROMETRY</scope>
    <source>
        <strain>ATCC 51907 / DSM 11121 / KW20 / Rd</strain>
    </source>
</reference>
<reference key="3">
    <citation type="journal article" date="2001" name="Acta Crystallogr. D">
        <title>Crystallization and preliminary X-ray analysis of the recombinant dihaem cytochrome c (NapB) from Haemophilus influenzae.</title>
        <authorList>
            <person name="Brige A."/>
            <person name="Leys D."/>
            <person name="Van Beeumen J.J."/>
        </authorList>
    </citation>
    <scope>CRYSTALLIZATION</scope>
    <scope>SUBCELLULAR LOCATION</scope>
    <scope>MASS SPECTROMETRY</scope>
    <source>
        <strain>ATCC 51907 / DSM 11121 / KW20 / Rd</strain>
    </source>
</reference>
<reference key="4">
    <citation type="journal article" date="2002" name="Biochemistry">
        <title>The 1.25 A resolution structure of the diheme NapB subunit of soluble nitrate reductase reveals a novel cytochrome c fold with a stacked heme arrangement.</title>
        <authorList>
            <person name="Brige A."/>
            <person name="Leys D."/>
            <person name="Meyer T.E."/>
            <person name="Cusanovich M.A."/>
            <person name="Van Beeumen J.J."/>
        </authorList>
    </citation>
    <scope>X-RAY CRYSTALLOGRAPHY (1.25 ANGSTROMS) OF 28-150 IN COMPLEX WITH HEME C</scope>
    <scope>PTM</scope>
    <source>
        <strain>ATCC 51907 / DSM 11121 / KW20 / Rd</strain>
    </source>
</reference>
<proteinExistence type="evidence at protein level"/>